<proteinExistence type="inferred from homology"/>
<organism>
    <name type="scientific">Mycolicibacterium vanbaalenii (strain DSM 7251 / JCM 13017 / BCRC 16820 / KCTC 9966 / NRRL B-24157 / PYR-1)</name>
    <name type="common">Mycobacterium vanbaalenii</name>
    <dbReference type="NCBI Taxonomy" id="350058"/>
    <lineage>
        <taxon>Bacteria</taxon>
        <taxon>Bacillati</taxon>
        <taxon>Actinomycetota</taxon>
        <taxon>Actinomycetes</taxon>
        <taxon>Mycobacteriales</taxon>
        <taxon>Mycobacteriaceae</taxon>
        <taxon>Mycolicibacterium</taxon>
    </lineage>
</organism>
<dbReference type="EMBL" id="CP000511">
    <property type="protein sequence ID" value="ABM14618.1"/>
    <property type="molecule type" value="Genomic_DNA"/>
</dbReference>
<dbReference type="RefSeq" id="WP_011781005.1">
    <property type="nucleotide sequence ID" value="NZ_JACKSD010000345.1"/>
</dbReference>
<dbReference type="SMR" id="A1TBR8"/>
<dbReference type="STRING" id="350058.Mvan_3837"/>
<dbReference type="KEGG" id="mva:Mvan_3837"/>
<dbReference type="eggNOG" id="COG1420">
    <property type="taxonomic scope" value="Bacteria"/>
</dbReference>
<dbReference type="HOGENOM" id="CLU_050019_2_0_11"/>
<dbReference type="Proteomes" id="UP000009159">
    <property type="component" value="Chromosome"/>
</dbReference>
<dbReference type="GO" id="GO:0003677">
    <property type="term" value="F:DNA binding"/>
    <property type="evidence" value="ECO:0007669"/>
    <property type="project" value="InterPro"/>
</dbReference>
<dbReference type="GO" id="GO:0045892">
    <property type="term" value="P:negative regulation of DNA-templated transcription"/>
    <property type="evidence" value="ECO:0007669"/>
    <property type="project" value="UniProtKB-UniRule"/>
</dbReference>
<dbReference type="FunFam" id="1.10.10.10:FF:000049">
    <property type="entry name" value="Heat-inducible transcription repressor HrcA"/>
    <property type="match status" value="1"/>
</dbReference>
<dbReference type="Gene3D" id="3.30.450.40">
    <property type="match status" value="1"/>
</dbReference>
<dbReference type="Gene3D" id="3.30.390.60">
    <property type="entry name" value="Heat-inducible transcription repressor hrca homolog, domain 3"/>
    <property type="match status" value="1"/>
</dbReference>
<dbReference type="Gene3D" id="1.10.10.10">
    <property type="entry name" value="Winged helix-like DNA-binding domain superfamily/Winged helix DNA-binding domain"/>
    <property type="match status" value="1"/>
</dbReference>
<dbReference type="HAMAP" id="MF_00081">
    <property type="entry name" value="HrcA"/>
    <property type="match status" value="1"/>
</dbReference>
<dbReference type="InterPro" id="IPR029016">
    <property type="entry name" value="GAF-like_dom_sf"/>
</dbReference>
<dbReference type="InterPro" id="IPR002571">
    <property type="entry name" value="HrcA"/>
</dbReference>
<dbReference type="InterPro" id="IPR021153">
    <property type="entry name" value="HrcA_C"/>
</dbReference>
<dbReference type="InterPro" id="IPR036388">
    <property type="entry name" value="WH-like_DNA-bd_sf"/>
</dbReference>
<dbReference type="InterPro" id="IPR036390">
    <property type="entry name" value="WH_DNA-bd_sf"/>
</dbReference>
<dbReference type="InterPro" id="IPR023120">
    <property type="entry name" value="WHTH_transcript_rep_HrcA_IDD"/>
</dbReference>
<dbReference type="NCBIfam" id="TIGR00331">
    <property type="entry name" value="hrcA"/>
    <property type="match status" value="1"/>
</dbReference>
<dbReference type="PANTHER" id="PTHR34824">
    <property type="entry name" value="HEAT-INDUCIBLE TRANSCRIPTION REPRESSOR HRCA"/>
    <property type="match status" value="1"/>
</dbReference>
<dbReference type="PANTHER" id="PTHR34824:SF1">
    <property type="entry name" value="HEAT-INDUCIBLE TRANSCRIPTION REPRESSOR HRCA"/>
    <property type="match status" value="1"/>
</dbReference>
<dbReference type="Pfam" id="PF01628">
    <property type="entry name" value="HrcA"/>
    <property type="match status" value="1"/>
</dbReference>
<dbReference type="PIRSF" id="PIRSF005485">
    <property type="entry name" value="HrcA"/>
    <property type="match status" value="1"/>
</dbReference>
<dbReference type="SUPFAM" id="SSF55781">
    <property type="entry name" value="GAF domain-like"/>
    <property type="match status" value="1"/>
</dbReference>
<dbReference type="SUPFAM" id="SSF46785">
    <property type="entry name" value="Winged helix' DNA-binding domain"/>
    <property type="match status" value="1"/>
</dbReference>
<gene>
    <name evidence="1" type="primary">hrcA</name>
    <name type="ordered locus">Mvan_3837</name>
</gene>
<comment type="function">
    <text evidence="1">Negative regulator of class I heat shock genes (grpE-dnaK-dnaJ and groELS operons). Prevents heat-shock induction of these operons.</text>
</comment>
<comment type="similarity">
    <text evidence="1">Belongs to the HrcA family.</text>
</comment>
<name>HRCA_MYCVP</name>
<reference key="1">
    <citation type="submission" date="2006-12" db="EMBL/GenBank/DDBJ databases">
        <title>Complete sequence of Mycobacterium vanbaalenii PYR-1.</title>
        <authorList>
            <consortium name="US DOE Joint Genome Institute"/>
            <person name="Copeland A."/>
            <person name="Lucas S."/>
            <person name="Lapidus A."/>
            <person name="Barry K."/>
            <person name="Detter J.C."/>
            <person name="Glavina del Rio T."/>
            <person name="Hammon N."/>
            <person name="Israni S."/>
            <person name="Dalin E."/>
            <person name="Tice H."/>
            <person name="Pitluck S."/>
            <person name="Singan V."/>
            <person name="Schmutz J."/>
            <person name="Larimer F."/>
            <person name="Land M."/>
            <person name="Hauser L."/>
            <person name="Kyrpides N."/>
            <person name="Anderson I.J."/>
            <person name="Miller C."/>
            <person name="Richardson P."/>
        </authorList>
    </citation>
    <scope>NUCLEOTIDE SEQUENCE [LARGE SCALE GENOMIC DNA]</scope>
    <source>
        <strain>DSM 7251 / JCM 13017 / BCRC 16820 / KCTC 9966 / NRRL B-24157 / PYR-1</strain>
    </source>
</reference>
<feature type="chain" id="PRO_1000010433" description="Heat-inducible transcription repressor HrcA">
    <location>
        <begin position="1"/>
        <end position="343"/>
    </location>
</feature>
<accession>A1TBR8</accession>
<protein>
    <recommendedName>
        <fullName evidence="1">Heat-inducible transcription repressor HrcA</fullName>
    </recommendedName>
</protein>
<evidence type="ECO:0000255" key="1">
    <source>
        <dbReference type="HAMAP-Rule" id="MF_00081"/>
    </source>
</evidence>
<sequence length="343" mass="36533">MGSADDRRFEVLRAIVADFVATKEPIGSKAIVERHNLGVSSATVRNDMAVLEAEGYITQPHTSSGRVPTEKGYREFVDRLQDVKPMSGAERRAILQFLESGVDLDDVLRRAVRLLAQLTRQVAVVQYPTLTTSTVRRLEVVALTPARLLLVVITDTGRVDQRIVELGDGIDDGQLAQLRDMLGSALEGKPLAAASVAVSDLAVHLNGQGGLADAVGRSATVLVETLVEHTEERLLLGGTANLTRNTADFGGSLRSVLEALEEQVVVLRLLAKQQEAGKVTVRIGHETEAEEMAGTSVISTAYGSAGKVFGGMGVLGPTRMDYPGTIANVAAVALYIGEVLGNR</sequence>
<keyword id="KW-0678">Repressor</keyword>
<keyword id="KW-0346">Stress response</keyword>
<keyword id="KW-0804">Transcription</keyword>
<keyword id="KW-0805">Transcription regulation</keyword>